<reference key="1">
    <citation type="submission" date="2007-10" db="EMBL/GenBank/DDBJ databases">
        <title>Complete genome of Alkaliphilus oremlandii OhILAs.</title>
        <authorList>
            <person name="Copeland A."/>
            <person name="Lucas S."/>
            <person name="Lapidus A."/>
            <person name="Barry K."/>
            <person name="Detter J.C."/>
            <person name="Glavina del Rio T."/>
            <person name="Hammon N."/>
            <person name="Israni S."/>
            <person name="Dalin E."/>
            <person name="Tice H."/>
            <person name="Pitluck S."/>
            <person name="Chain P."/>
            <person name="Malfatti S."/>
            <person name="Shin M."/>
            <person name="Vergez L."/>
            <person name="Schmutz J."/>
            <person name="Larimer F."/>
            <person name="Land M."/>
            <person name="Hauser L."/>
            <person name="Kyrpides N."/>
            <person name="Mikhailova N."/>
            <person name="Stolz J.F."/>
            <person name="Dawson A."/>
            <person name="Fisher E."/>
            <person name="Crable B."/>
            <person name="Perera E."/>
            <person name="Lisak J."/>
            <person name="Ranganathan M."/>
            <person name="Basu P."/>
            <person name="Richardson P."/>
        </authorList>
    </citation>
    <scope>NUCLEOTIDE SEQUENCE [LARGE SCALE GENOMIC DNA]</scope>
    <source>
        <strain>OhILAs</strain>
    </source>
</reference>
<name>GSA_ALKOO</name>
<keyword id="KW-0963">Cytoplasm</keyword>
<keyword id="KW-0413">Isomerase</keyword>
<keyword id="KW-0627">Porphyrin biosynthesis</keyword>
<keyword id="KW-0663">Pyridoxal phosphate</keyword>
<keyword id="KW-1185">Reference proteome</keyword>
<proteinExistence type="inferred from homology"/>
<protein>
    <recommendedName>
        <fullName evidence="1">Glutamate-1-semialdehyde 2,1-aminomutase</fullName>
        <shortName evidence="1">GSA</shortName>
        <ecNumber evidence="1">5.4.3.8</ecNumber>
    </recommendedName>
    <alternativeName>
        <fullName evidence="1">Glutamate-1-semialdehyde aminotransferase</fullName>
        <shortName evidence="1">GSA-AT</shortName>
    </alternativeName>
</protein>
<accession>A8MGY8</accession>
<sequence length="424" mass="45515">MKKSQELMTRAKRVIPGGVNSPVRAFNAVGGCPRFIKSASGAYIQDVEGNSYIDYIGSWGPMILGHSNPKILQAVSKVMIKGLSFGAATELEVEMAELITRLVPSVEMVRMVNSGTEAVMSALRLARGYTKREKVIKFAGCYHGHSDSMLVKAGSGALVNGVPDSAGVTIGVAKDTLVAEYNDIDSVNLLFEQNKNEIAAVILEPVAANMGVVLPKDGFLEKVRQLCSQNGALLIFDEVITGFRLAAGGAQEYFGVTADLVTYGKIIGGGMPVGAYGGRREIMECISPIGPVYQAGTLSGNPLAMAAGITMLTELSENPQIYEHINRLGTKLGDGLRKITSNTVNSVGSLISMFMTENEVIDIRSAMASDTGEYSRLFNHLLNKGIYIAPAQFEAMFISNAHTDEDIEKTLSAIEESLNEMRKK</sequence>
<comment type="catalytic activity">
    <reaction evidence="1">
        <text>(S)-4-amino-5-oxopentanoate = 5-aminolevulinate</text>
        <dbReference type="Rhea" id="RHEA:14265"/>
        <dbReference type="ChEBI" id="CHEBI:57501"/>
        <dbReference type="ChEBI" id="CHEBI:356416"/>
        <dbReference type="EC" id="5.4.3.8"/>
    </reaction>
</comment>
<comment type="cofactor">
    <cofactor evidence="1">
        <name>pyridoxal 5'-phosphate</name>
        <dbReference type="ChEBI" id="CHEBI:597326"/>
    </cofactor>
</comment>
<comment type="pathway">
    <text evidence="1">Porphyrin-containing compound metabolism; protoporphyrin-IX biosynthesis; 5-aminolevulinate from L-glutamyl-tRNA(Glu): step 2/2.</text>
</comment>
<comment type="subunit">
    <text evidence="1">Homodimer.</text>
</comment>
<comment type="subcellular location">
    <subcellularLocation>
        <location evidence="1">Cytoplasm</location>
    </subcellularLocation>
</comment>
<comment type="similarity">
    <text evidence="1">Belongs to the class-III pyridoxal-phosphate-dependent aminotransferase family. HemL subfamily.</text>
</comment>
<evidence type="ECO:0000255" key="1">
    <source>
        <dbReference type="HAMAP-Rule" id="MF_00375"/>
    </source>
</evidence>
<organism>
    <name type="scientific">Alkaliphilus oremlandii (strain OhILAs)</name>
    <name type="common">Clostridium oremlandii (strain OhILAs)</name>
    <dbReference type="NCBI Taxonomy" id="350688"/>
    <lineage>
        <taxon>Bacteria</taxon>
        <taxon>Bacillati</taxon>
        <taxon>Bacillota</taxon>
        <taxon>Clostridia</taxon>
        <taxon>Peptostreptococcales</taxon>
        <taxon>Natronincolaceae</taxon>
        <taxon>Alkaliphilus</taxon>
    </lineage>
</organism>
<feature type="chain" id="PRO_0000382248" description="Glutamate-1-semialdehyde 2,1-aminomutase">
    <location>
        <begin position="1"/>
        <end position="424"/>
    </location>
</feature>
<feature type="modified residue" description="N6-(pyridoxal phosphate)lysine" evidence="1">
    <location>
        <position position="265"/>
    </location>
</feature>
<gene>
    <name evidence="1" type="primary">hemL</name>
    <name type="ordered locus">Clos_1330</name>
</gene>
<dbReference type="EC" id="5.4.3.8" evidence="1"/>
<dbReference type="EMBL" id="CP000853">
    <property type="protein sequence ID" value="ABW18875.1"/>
    <property type="molecule type" value="Genomic_DNA"/>
</dbReference>
<dbReference type="RefSeq" id="WP_012159187.1">
    <property type="nucleotide sequence ID" value="NC_009922.1"/>
</dbReference>
<dbReference type="SMR" id="A8MGY8"/>
<dbReference type="STRING" id="350688.Clos_1330"/>
<dbReference type="KEGG" id="aoe:Clos_1330"/>
<dbReference type="eggNOG" id="COG0001">
    <property type="taxonomic scope" value="Bacteria"/>
</dbReference>
<dbReference type="HOGENOM" id="CLU_016922_1_5_9"/>
<dbReference type="OrthoDB" id="9807885at2"/>
<dbReference type="UniPathway" id="UPA00251">
    <property type="reaction ID" value="UER00317"/>
</dbReference>
<dbReference type="Proteomes" id="UP000000269">
    <property type="component" value="Chromosome"/>
</dbReference>
<dbReference type="GO" id="GO:0005737">
    <property type="term" value="C:cytoplasm"/>
    <property type="evidence" value="ECO:0007669"/>
    <property type="project" value="UniProtKB-SubCell"/>
</dbReference>
<dbReference type="GO" id="GO:0042286">
    <property type="term" value="F:glutamate-1-semialdehyde 2,1-aminomutase activity"/>
    <property type="evidence" value="ECO:0007669"/>
    <property type="project" value="UniProtKB-UniRule"/>
</dbReference>
<dbReference type="GO" id="GO:0030170">
    <property type="term" value="F:pyridoxal phosphate binding"/>
    <property type="evidence" value="ECO:0007669"/>
    <property type="project" value="InterPro"/>
</dbReference>
<dbReference type="GO" id="GO:0008483">
    <property type="term" value="F:transaminase activity"/>
    <property type="evidence" value="ECO:0007669"/>
    <property type="project" value="InterPro"/>
</dbReference>
<dbReference type="GO" id="GO:0006782">
    <property type="term" value="P:protoporphyrinogen IX biosynthetic process"/>
    <property type="evidence" value="ECO:0007669"/>
    <property type="project" value="UniProtKB-UniRule"/>
</dbReference>
<dbReference type="CDD" id="cd00610">
    <property type="entry name" value="OAT_like"/>
    <property type="match status" value="1"/>
</dbReference>
<dbReference type="FunFam" id="3.40.640.10:FF:000021">
    <property type="entry name" value="Glutamate-1-semialdehyde 2,1-aminomutase"/>
    <property type="match status" value="1"/>
</dbReference>
<dbReference type="Gene3D" id="3.90.1150.10">
    <property type="entry name" value="Aspartate Aminotransferase, domain 1"/>
    <property type="match status" value="1"/>
</dbReference>
<dbReference type="Gene3D" id="3.40.640.10">
    <property type="entry name" value="Type I PLP-dependent aspartate aminotransferase-like (Major domain)"/>
    <property type="match status" value="1"/>
</dbReference>
<dbReference type="HAMAP" id="MF_00375">
    <property type="entry name" value="HemL_aminotrans_3"/>
    <property type="match status" value="1"/>
</dbReference>
<dbReference type="InterPro" id="IPR004639">
    <property type="entry name" value="4pyrrol_synth_GluAld_NH2Trfase"/>
</dbReference>
<dbReference type="InterPro" id="IPR005814">
    <property type="entry name" value="Aminotrans_3"/>
</dbReference>
<dbReference type="InterPro" id="IPR049704">
    <property type="entry name" value="Aminotrans_3_PPA_site"/>
</dbReference>
<dbReference type="InterPro" id="IPR015424">
    <property type="entry name" value="PyrdxlP-dep_Trfase"/>
</dbReference>
<dbReference type="InterPro" id="IPR015421">
    <property type="entry name" value="PyrdxlP-dep_Trfase_major"/>
</dbReference>
<dbReference type="InterPro" id="IPR015422">
    <property type="entry name" value="PyrdxlP-dep_Trfase_small"/>
</dbReference>
<dbReference type="NCBIfam" id="TIGR00713">
    <property type="entry name" value="hemL"/>
    <property type="match status" value="1"/>
</dbReference>
<dbReference type="NCBIfam" id="NF000818">
    <property type="entry name" value="PRK00062.1"/>
    <property type="match status" value="1"/>
</dbReference>
<dbReference type="PANTHER" id="PTHR43713">
    <property type="entry name" value="GLUTAMATE-1-SEMIALDEHYDE 2,1-AMINOMUTASE"/>
    <property type="match status" value="1"/>
</dbReference>
<dbReference type="PANTHER" id="PTHR43713:SF3">
    <property type="entry name" value="GLUTAMATE-1-SEMIALDEHYDE 2,1-AMINOMUTASE 1, CHLOROPLASTIC-RELATED"/>
    <property type="match status" value="1"/>
</dbReference>
<dbReference type="Pfam" id="PF00202">
    <property type="entry name" value="Aminotran_3"/>
    <property type="match status" value="1"/>
</dbReference>
<dbReference type="SUPFAM" id="SSF53383">
    <property type="entry name" value="PLP-dependent transferases"/>
    <property type="match status" value="1"/>
</dbReference>
<dbReference type="PROSITE" id="PS00600">
    <property type="entry name" value="AA_TRANSFER_CLASS_3"/>
    <property type="match status" value="1"/>
</dbReference>